<reference key="1">
    <citation type="journal article" date="2006" name="PLoS Biol.">
        <title>Metabolic complementarity and genomics of the dual bacterial symbiosis of sharpshooters.</title>
        <authorList>
            <person name="Wu D."/>
            <person name="Daugherty S.C."/>
            <person name="Van Aken S.E."/>
            <person name="Pai G.H."/>
            <person name="Watkins K.L."/>
            <person name="Khouri H."/>
            <person name="Tallon L.J."/>
            <person name="Zaborsky J.M."/>
            <person name="Dunbar H.E."/>
            <person name="Tran P.L."/>
            <person name="Moran N.A."/>
            <person name="Eisen J.A."/>
        </authorList>
    </citation>
    <scope>NUCLEOTIDE SEQUENCE [LARGE SCALE GENOMIC DNA]</scope>
</reference>
<evidence type="ECO:0000255" key="1">
    <source>
        <dbReference type="HAMAP-Rule" id="MF_00402"/>
    </source>
</evidence>
<evidence type="ECO:0000305" key="2"/>
<organism>
    <name type="scientific">Baumannia cicadellinicola subsp. Homalodisca coagulata</name>
    <dbReference type="NCBI Taxonomy" id="374463"/>
    <lineage>
        <taxon>Bacteria</taxon>
        <taxon>Pseudomonadati</taxon>
        <taxon>Pseudomonadota</taxon>
        <taxon>Gammaproteobacteria</taxon>
        <taxon>Candidatus Palibaumannia</taxon>
    </lineage>
</organism>
<dbReference type="EMBL" id="CP000238">
    <property type="protein sequence ID" value="ABF13860.1"/>
    <property type="molecule type" value="Genomic_DNA"/>
</dbReference>
<dbReference type="RefSeq" id="WP_011520385.1">
    <property type="nucleotide sequence ID" value="NC_007984.1"/>
</dbReference>
<dbReference type="SMR" id="Q1LTR2"/>
<dbReference type="STRING" id="374463.BCI_0195"/>
<dbReference type="KEGG" id="bci:BCI_0195"/>
<dbReference type="HOGENOM" id="CLU_103507_2_2_6"/>
<dbReference type="OrthoDB" id="9803541at2"/>
<dbReference type="Proteomes" id="UP000002427">
    <property type="component" value="Chromosome"/>
</dbReference>
<dbReference type="GO" id="GO:0022625">
    <property type="term" value="C:cytosolic large ribosomal subunit"/>
    <property type="evidence" value="ECO:0007669"/>
    <property type="project" value="TreeGrafter"/>
</dbReference>
<dbReference type="GO" id="GO:0003735">
    <property type="term" value="F:structural constituent of ribosome"/>
    <property type="evidence" value="ECO:0007669"/>
    <property type="project" value="InterPro"/>
</dbReference>
<dbReference type="GO" id="GO:0006412">
    <property type="term" value="P:translation"/>
    <property type="evidence" value="ECO:0007669"/>
    <property type="project" value="UniProtKB-UniRule"/>
</dbReference>
<dbReference type="FunFam" id="2.30.30.790:FF:000001">
    <property type="entry name" value="50S ribosomal protein L19"/>
    <property type="match status" value="1"/>
</dbReference>
<dbReference type="Gene3D" id="2.30.30.790">
    <property type="match status" value="1"/>
</dbReference>
<dbReference type="HAMAP" id="MF_00402">
    <property type="entry name" value="Ribosomal_bL19"/>
    <property type="match status" value="1"/>
</dbReference>
<dbReference type="InterPro" id="IPR001857">
    <property type="entry name" value="Ribosomal_bL19"/>
</dbReference>
<dbReference type="InterPro" id="IPR038657">
    <property type="entry name" value="Ribosomal_bL19_sf"/>
</dbReference>
<dbReference type="InterPro" id="IPR008991">
    <property type="entry name" value="Translation_prot_SH3-like_sf"/>
</dbReference>
<dbReference type="NCBIfam" id="TIGR01024">
    <property type="entry name" value="rplS_bact"/>
    <property type="match status" value="1"/>
</dbReference>
<dbReference type="PANTHER" id="PTHR15680:SF9">
    <property type="entry name" value="LARGE RIBOSOMAL SUBUNIT PROTEIN BL19M"/>
    <property type="match status" value="1"/>
</dbReference>
<dbReference type="PANTHER" id="PTHR15680">
    <property type="entry name" value="RIBOSOMAL PROTEIN L19"/>
    <property type="match status" value="1"/>
</dbReference>
<dbReference type="Pfam" id="PF01245">
    <property type="entry name" value="Ribosomal_L19"/>
    <property type="match status" value="1"/>
</dbReference>
<dbReference type="PIRSF" id="PIRSF002191">
    <property type="entry name" value="Ribosomal_L19"/>
    <property type="match status" value="1"/>
</dbReference>
<dbReference type="PRINTS" id="PR00061">
    <property type="entry name" value="RIBOSOMALL19"/>
</dbReference>
<dbReference type="SUPFAM" id="SSF50104">
    <property type="entry name" value="Translation proteins SH3-like domain"/>
    <property type="match status" value="1"/>
</dbReference>
<protein>
    <recommendedName>
        <fullName evidence="1">Large ribosomal subunit protein bL19</fullName>
    </recommendedName>
    <alternativeName>
        <fullName evidence="2">50S ribosomal protein L19</fullName>
    </alternativeName>
</protein>
<keyword id="KW-1185">Reference proteome</keyword>
<keyword id="KW-0687">Ribonucleoprotein</keyword>
<keyword id="KW-0689">Ribosomal protein</keyword>
<sequence length="115" mass="13297">MFNLIQHIEHEQMKNLPAFRPGDSVEVKVWVVEGSKKRLQSFEGMIIAIRNRGLHSAFTVRKISNGEGVERVFQMHSPIIESITVKRCGFVRKAKLYYLRKRTGKAARIKERISS</sequence>
<feature type="chain" id="PRO_0000252497" description="Large ribosomal subunit protein bL19">
    <location>
        <begin position="1"/>
        <end position="115"/>
    </location>
</feature>
<gene>
    <name evidence="1" type="primary">rplS</name>
    <name type="ordered locus">BCI_0195</name>
</gene>
<name>RL19_BAUCH</name>
<comment type="function">
    <text evidence="1">This protein is located at the 30S-50S ribosomal subunit interface and may play a role in the structure and function of the aminoacyl-tRNA binding site.</text>
</comment>
<comment type="similarity">
    <text evidence="1">Belongs to the bacterial ribosomal protein bL19 family.</text>
</comment>
<proteinExistence type="inferred from homology"/>
<accession>Q1LTR2</accession>